<name>HSP1_ANTSW</name>
<protein>
    <recommendedName>
        <fullName>Sperm protamine P1</fullName>
    </recommendedName>
</protein>
<keyword id="KW-0158">Chromosome</keyword>
<keyword id="KW-0217">Developmental protein</keyword>
<keyword id="KW-0221">Differentiation</keyword>
<keyword id="KW-0226">DNA condensation</keyword>
<keyword id="KW-0238">DNA-binding</keyword>
<keyword id="KW-0544">Nucleosome core</keyword>
<keyword id="KW-0539">Nucleus</keyword>
<keyword id="KW-0744">Spermatogenesis</keyword>
<feature type="chain" id="PRO_0000191449" description="Sperm protamine P1">
    <location>
        <begin position="1"/>
        <end position="63"/>
    </location>
</feature>
<feature type="region of interest" description="Disordered" evidence="2">
    <location>
        <begin position="1"/>
        <end position="63"/>
    </location>
</feature>
<feature type="sequence conflict" description="In Ref. 1; AAB95429." evidence="3" ref="1">
    <original>HHN</original>
    <variation>GR</variation>
    <location>
        <begin position="26"/>
        <end position="28"/>
    </location>
</feature>
<proteinExistence type="evidence at transcript level"/>
<accession>Q71V22</accession>
<accession>P42130</accession>
<accession>P42146</accession>
<sequence>MARYRRHSRSRSRSRYRRRRRRRSRHHNRRRTYRRSRRHSRRRRGRRRGYSRRRYSRRGRRRY</sequence>
<dbReference type="EMBL" id="L35338">
    <property type="protein sequence ID" value="AAB95429.1"/>
    <property type="molecule type" value="Genomic_DNA"/>
</dbReference>
<dbReference type="EMBL" id="AF038291">
    <property type="protein sequence ID" value="AAC15618.1"/>
    <property type="molecule type" value="Genomic_DNA"/>
</dbReference>
<dbReference type="GO" id="GO:0000786">
    <property type="term" value="C:nucleosome"/>
    <property type="evidence" value="ECO:0007669"/>
    <property type="project" value="UniProtKB-KW"/>
</dbReference>
<dbReference type="GO" id="GO:0005634">
    <property type="term" value="C:nucleus"/>
    <property type="evidence" value="ECO:0007669"/>
    <property type="project" value="UniProtKB-SubCell"/>
</dbReference>
<dbReference type="GO" id="GO:0003677">
    <property type="term" value="F:DNA binding"/>
    <property type="evidence" value="ECO:0007669"/>
    <property type="project" value="UniProtKB-KW"/>
</dbReference>
<dbReference type="GO" id="GO:0030261">
    <property type="term" value="P:chromosome condensation"/>
    <property type="evidence" value="ECO:0007669"/>
    <property type="project" value="UniProtKB-KW"/>
</dbReference>
<dbReference type="GO" id="GO:0035092">
    <property type="term" value="P:sperm DNA condensation"/>
    <property type="evidence" value="ECO:0007669"/>
    <property type="project" value="InterPro"/>
</dbReference>
<dbReference type="InterPro" id="IPR000221">
    <property type="entry name" value="Protamine_P1"/>
</dbReference>
<dbReference type="PROSITE" id="PS00048">
    <property type="entry name" value="PROTAMINE_P1"/>
    <property type="match status" value="1"/>
</dbReference>
<organism>
    <name type="scientific">Antechinus swainsonii</name>
    <name type="common">Dusky antechinus</name>
    <dbReference type="NCBI Taxonomy" id="9284"/>
    <lineage>
        <taxon>Eukaryota</taxon>
        <taxon>Metazoa</taxon>
        <taxon>Chordata</taxon>
        <taxon>Craniata</taxon>
        <taxon>Vertebrata</taxon>
        <taxon>Euteleostomi</taxon>
        <taxon>Mammalia</taxon>
        <taxon>Metatheria</taxon>
        <taxon>Dasyuromorphia</taxon>
        <taxon>Dasyuridae</taxon>
        <taxon>Antechinus</taxon>
    </lineage>
</organism>
<comment type="function">
    <text>Protamines substitute for histones in the chromatin of sperm during the haploid phase of spermatogenesis. They compact sperm DNA into a highly condensed, stable and inactive complex.</text>
</comment>
<comment type="subcellular location">
    <subcellularLocation>
        <location evidence="1">Nucleus</location>
    </subcellularLocation>
    <subcellularLocation>
        <location evidence="1">Chromosome</location>
    </subcellularLocation>
</comment>
<comment type="tissue specificity">
    <text>Testis.</text>
</comment>
<comment type="similarity">
    <text evidence="3">Belongs to the protamine P1 family.</text>
</comment>
<evidence type="ECO:0000250" key="1"/>
<evidence type="ECO:0000256" key="2">
    <source>
        <dbReference type="SAM" id="MobiDB-lite"/>
    </source>
</evidence>
<evidence type="ECO:0000305" key="3"/>
<reference key="1">
    <citation type="journal article" date="1995" name="Proc. R. Soc. B">
        <title>Molecular phylogeny and evolution of marsupial protamine P1 genes.</title>
        <authorList>
            <person name="Retief J.D."/>
            <person name="Krajewski C."/>
            <person name="Westerman M."/>
            <person name="Winkfein R.J."/>
            <person name="Dixon G.H."/>
        </authorList>
    </citation>
    <scope>NUCLEOTIDE SEQUENCE [GENOMIC DNA]</scope>
</reference>
<reference key="2">
    <citation type="journal article" date="1998" name="J. Mammal.">
        <title>Phylogeny of the dasyurid marsupial genus Antechinus based on cytochrome-b, 12S-rRNA, and protamine-P1 genes.</title>
        <authorList>
            <person name="Armstrong L.A."/>
            <person name="Krajewski C."/>
            <person name="Westerman M."/>
        </authorList>
    </citation>
    <scope>NUCLEOTIDE SEQUENCE [GENOMIC DNA]</scope>
</reference>
<gene>
    <name type="primary">PRM1</name>
</gene>